<gene>
    <name type="primary">Ecm1</name>
</gene>
<name>ECM1_MOUSE</name>
<sequence>MGTVSRAALILACLALASAASEGAFKASDQREMTPERLFQHLHEVGYAAPPSPPQTRRLRVDHSVTSLHDPPLFEEQREVQPPSSPEDIPVYEEDWPTFLNPNVDKAGPAVPQEAIPLQKEQPPPQVHIEQKEIDPPAQPQEEIVQKEVKPHTLAGQLPPEPRTWNPARHCQQGRRGVWGHRLDGFPPGRPSPDNLKQICLPERQHVIYGPWNLPQTGYSHLSRQGETLNVLETGYSRCCRCRSDTNRLDCLKLVWEDAMTQFCEAEFSVKTRPHLCCRLRGEERFSCFQKEAPRPDYLLRPCPVHQNGMSSGPQLPFPPGLPTPDNVKNICLLRRFRAVPRNLPATDAIQRQLQALTRLETEFQRCCRQGHNHTCTWKAWEGTLDGYCERELAIKTHPHSCCHYPPSPARDECFAHLAPYPNYDRDILTLDLSRVTPNLMGQLCGSGRVLSKHKQIPGLIQNMTIRCCELPYPEQACCGEEEKLAFIENLCGPRRNSWKDPALCCDLSPEDKQINCFNTNYLRNVALVAGDTGNATGLGEQGPTRGTDANPAPGSKEE</sequence>
<keyword id="KW-0025">Alternative splicing</keyword>
<keyword id="KW-0037">Angiogenesis</keyword>
<keyword id="KW-0091">Biomineralization</keyword>
<keyword id="KW-0903">Direct protein sequencing</keyword>
<keyword id="KW-0272">Extracellular matrix</keyword>
<keyword id="KW-0325">Glycoprotein</keyword>
<keyword id="KW-0495">Mineral balance</keyword>
<keyword id="KW-0892">Osteogenesis</keyword>
<keyword id="KW-0597">Phosphoprotein</keyword>
<keyword id="KW-1185">Reference proteome</keyword>
<keyword id="KW-0677">Repeat</keyword>
<keyword id="KW-0964">Secreted</keyword>
<keyword id="KW-0732">Signal</keyword>
<proteinExistence type="evidence at protein level"/>
<protein>
    <recommendedName>
        <fullName>Extracellular matrix protein 1</fullName>
    </recommendedName>
    <alternativeName>
        <fullName>Secretory component p85</fullName>
    </alternativeName>
</protein>
<comment type="function">
    <text evidence="1">Involved in endochondral bone formation as negative regulator of bone mineralization. Stimulates the proliferation of endothelial cells and promotes angiogenesis. Inhibits MMP9 proteolytic activity (By similarity).</text>
</comment>
<comment type="subunit">
    <text evidence="1">Interacts (via C-terminus) with HSPG2 (via C-terminus). Interacts with EFEMP1/FBLN3 and LAMB3. Interacts with MMP9.</text>
</comment>
<comment type="subcellular location">
    <subcellularLocation>
        <location>Secreted</location>
        <location>Extracellular space</location>
        <location>Extracellular matrix</location>
    </subcellularLocation>
</comment>
<comment type="alternative products">
    <event type="alternative splicing"/>
    <isoform>
        <id>Q61508-1</id>
        <name>Long</name>
        <sequence type="displayed"/>
    </isoform>
    <isoform>
        <id>Q61508-2</id>
        <name>Short</name>
        <sequence type="described" ref="VSP_004230"/>
    </isoform>
</comment>
<comment type="tissue specificity">
    <text evidence="5">Expressed in the surrounding connective tissues of developing long bones, but not in the cartilage. The long isoform is expressed in a number of tissues including liver, heart and lungs. The short isoform is expressed in skin and cartilage-containing tissues such as tail and front paw. No expression is found in brain.</text>
</comment>
<dbReference type="EMBL" id="L33416">
    <property type="protein sequence ID" value="AAA37535.1"/>
    <property type="molecule type" value="mRNA"/>
</dbReference>
<dbReference type="EMBL" id="AK153009">
    <property type="protein sequence ID" value="BAE31648.1"/>
    <property type="molecule type" value="mRNA"/>
</dbReference>
<dbReference type="EMBL" id="AK153471">
    <property type="protein sequence ID" value="BAE32022.1"/>
    <property type="molecule type" value="mRNA"/>
</dbReference>
<dbReference type="CCDS" id="CCDS17619.1">
    <molecule id="Q61508-1"/>
</dbReference>
<dbReference type="RefSeq" id="NP_001396876.1">
    <molecule id="Q61508-2"/>
    <property type="nucleotide sequence ID" value="NM_001409947.1"/>
</dbReference>
<dbReference type="RefSeq" id="NP_031925.2">
    <molecule id="Q61508-1"/>
    <property type="nucleotide sequence ID" value="NM_007899.5"/>
</dbReference>
<dbReference type="BioGRID" id="199366">
    <property type="interactions" value="4"/>
</dbReference>
<dbReference type="FunCoup" id="Q61508">
    <property type="interactions" value="180"/>
</dbReference>
<dbReference type="IntAct" id="Q61508">
    <property type="interactions" value="1"/>
</dbReference>
<dbReference type="STRING" id="10090.ENSMUSP00000112665"/>
<dbReference type="GlyCosmos" id="Q61508">
    <property type="glycosylation" value="3 sites, No reported glycans"/>
</dbReference>
<dbReference type="GlyGen" id="Q61508">
    <property type="glycosylation" value="3 sites, 2 N-linked glycans (3 sites)"/>
</dbReference>
<dbReference type="iPTMnet" id="Q61508"/>
<dbReference type="PhosphoSitePlus" id="Q61508"/>
<dbReference type="SwissPalm" id="Q61508"/>
<dbReference type="CPTAC" id="non-CPTAC-3536"/>
<dbReference type="jPOST" id="Q61508"/>
<dbReference type="PaxDb" id="10090-ENSMUSP00000112665"/>
<dbReference type="PeptideAtlas" id="Q61508"/>
<dbReference type="ProteomicsDB" id="277755">
    <molecule id="Q61508-1"/>
</dbReference>
<dbReference type="ProteomicsDB" id="277756">
    <molecule id="Q61508-2"/>
</dbReference>
<dbReference type="Pumba" id="Q61508"/>
<dbReference type="Antibodypedia" id="20285">
    <property type="antibodies" value="519 antibodies from 36 providers"/>
</dbReference>
<dbReference type="DNASU" id="13601"/>
<dbReference type="Ensembl" id="ENSMUST00000117507.10">
    <molecule id="Q61508-1"/>
    <property type="protein sequence ID" value="ENSMUSP00000112665.3"/>
    <property type="gene ID" value="ENSMUSG00000028108.17"/>
</dbReference>
<dbReference type="GeneID" id="13601"/>
<dbReference type="KEGG" id="mmu:13601"/>
<dbReference type="UCSC" id="uc008qko.2">
    <molecule id="Q61508-1"/>
    <property type="organism name" value="mouse"/>
</dbReference>
<dbReference type="AGR" id="MGI:103060"/>
<dbReference type="CTD" id="1893"/>
<dbReference type="MGI" id="MGI:103060">
    <property type="gene designation" value="Ecm1"/>
</dbReference>
<dbReference type="VEuPathDB" id="HostDB:ENSMUSG00000028108"/>
<dbReference type="eggNOG" id="ENOG502RY3T">
    <property type="taxonomic scope" value="Eukaryota"/>
</dbReference>
<dbReference type="GeneTree" id="ENSGT00390000006215"/>
<dbReference type="HOGENOM" id="CLU_038587_0_0_1"/>
<dbReference type="InParanoid" id="Q61508"/>
<dbReference type="OMA" id="CCRCRSH"/>
<dbReference type="PhylomeDB" id="Q61508"/>
<dbReference type="TreeFam" id="TF330786"/>
<dbReference type="Reactome" id="R-MMU-114608">
    <property type="pathway name" value="Platelet degranulation"/>
</dbReference>
<dbReference type="BioGRID-ORCS" id="13601">
    <property type="hits" value="1 hit in 80 CRISPR screens"/>
</dbReference>
<dbReference type="ChiTaRS" id="Ecm1">
    <property type="organism name" value="mouse"/>
</dbReference>
<dbReference type="PRO" id="PR:Q61508"/>
<dbReference type="Proteomes" id="UP000000589">
    <property type="component" value="Chromosome 3"/>
</dbReference>
<dbReference type="RNAct" id="Q61508">
    <property type="molecule type" value="protein"/>
</dbReference>
<dbReference type="Bgee" id="ENSMUSG00000028108">
    <property type="expression patterns" value="Expressed in esophagus and 63 other cell types or tissues"/>
</dbReference>
<dbReference type="ExpressionAtlas" id="Q61508">
    <property type="expression patterns" value="baseline and differential"/>
</dbReference>
<dbReference type="GO" id="GO:0062023">
    <property type="term" value="C:collagen-containing extracellular matrix"/>
    <property type="evidence" value="ECO:0007005"/>
    <property type="project" value="BHF-UCL"/>
</dbReference>
<dbReference type="GO" id="GO:0005615">
    <property type="term" value="C:extracellular space"/>
    <property type="evidence" value="ECO:0000314"/>
    <property type="project" value="MGI"/>
</dbReference>
<dbReference type="GO" id="GO:0005134">
    <property type="term" value="F:interleukin-2 receptor binding"/>
    <property type="evidence" value="ECO:0000353"/>
    <property type="project" value="MGI"/>
</dbReference>
<dbReference type="GO" id="GO:0002020">
    <property type="term" value="F:protease binding"/>
    <property type="evidence" value="ECO:0007669"/>
    <property type="project" value="Ensembl"/>
</dbReference>
<dbReference type="GO" id="GO:0001525">
    <property type="term" value="P:angiogenesis"/>
    <property type="evidence" value="ECO:0007669"/>
    <property type="project" value="UniProtKB-KW"/>
</dbReference>
<dbReference type="GO" id="GO:0031214">
    <property type="term" value="P:biomineral tissue development"/>
    <property type="evidence" value="ECO:0007669"/>
    <property type="project" value="UniProtKB-KW"/>
</dbReference>
<dbReference type="GO" id="GO:0002063">
    <property type="term" value="P:chondrocyte development"/>
    <property type="evidence" value="ECO:0000315"/>
    <property type="project" value="MGI"/>
</dbReference>
<dbReference type="GO" id="GO:0003416">
    <property type="term" value="P:endochondral bone growth"/>
    <property type="evidence" value="ECO:0000315"/>
    <property type="project" value="MGI"/>
</dbReference>
<dbReference type="GO" id="GO:0006954">
    <property type="term" value="P:inflammatory response"/>
    <property type="evidence" value="ECO:0000315"/>
    <property type="project" value="MGI"/>
</dbReference>
<dbReference type="GO" id="GO:0030502">
    <property type="term" value="P:negative regulation of bone mineralization"/>
    <property type="evidence" value="ECO:0000250"/>
    <property type="project" value="UniProtKB"/>
</dbReference>
<dbReference type="GO" id="GO:0001960">
    <property type="term" value="P:negative regulation of cytokine-mediated signaling pathway"/>
    <property type="evidence" value="ECO:0000314"/>
    <property type="project" value="MGI"/>
</dbReference>
<dbReference type="GO" id="GO:0010466">
    <property type="term" value="P:negative regulation of peptidase activity"/>
    <property type="evidence" value="ECO:0000250"/>
    <property type="project" value="UniProtKB"/>
</dbReference>
<dbReference type="GO" id="GO:0001503">
    <property type="term" value="P:ossification"/>
    <property type="evidence" value="ECO:0007669"/>
    <property type="project" value="UniProtKB-KW"/>
</dbReference>
<dbReference type="GO" id="GO:0045766">
    <property type="term" value="P:positive regulation of angiogenesis"/>
    <property type="evidence" value="ECO:0000250"/>
    <property type="project" value="UniProtKB"/>
</dbReference>
<dbReference type="GO" id="GO:0001938">
    <property type="term" value="P:positive regulation of endothelial cell proliferation"/>
    <property type="evidence" value="ECO:0000250"/>
    <property type="project" value="UniProtKB"/>
</dbReference>
<dbReference type="GO" id="GO:0030500">
    <property type="term" value="P:regulation of bone mineralization"/>
    <property type="evidence" value="ECO:0000315"/>
    <property type="project" value="MGI"/>
</dbReference>
<dbReference type="GO" id="GO:2000404">
    <property type="term" value="P:regulation of T cell migration"/>
    <property type="evidence" value="ECO:0000315"/>
    <property type="project" value="MGI"/>
</dbReference>
<dbReference type="GO" id="GO:0006357">
    <property type="term" value="P:regulation of transcription by RNA polymerase II"/>
    <property type="evidence" value="ECO:0000315"/>
    <property type="project" value="MGI"/>
</dbReference>
<dbReference type="GO" id="GO:0002828">
    <property type="term" value="P:regulation of type 2 immune response"/>
    <property type="evidence" value="ECO:0000315"/>
    <property type="project" value="MGI"/>
</dbReference>
<dbReference type="GO" id="GO:0007165">
    <property type="term" value="P:signal transduction"/>
    <property type="evidence" value="ECO:0007669"/>
    <property type="project" value="InterPro"/>
</dbReference>
<dbReference type="FunFam" id="1.10.246.10:FF:000006">
    <property type="entry name" value="Extracellular matrix protein 1"/>
    <property type="match status" value="1"/>
</dbReference>
<dbReference type="Gene3D" id="1.10.246.10">
    <property type="match status" value="2"/>
</dbReference>
<dbReference type="InterPro" id="IPR008605">
    <property type="entry name" value="ECM1"/>
</dbReference>
<dbReference type="InterPro" id="IPR020858">
    <property type="entry name" value="Serum_albumin-like"/>
</dbReference>
<dbReference type="PANTHER" id="PTHR16776">
    <property type="entry name" value="EXTRACELLULAR MATRIX PROTEIN 1"/>
    <property type="match status" value="1"/>
</dbReference>
<dbReference type="PANTHER" id="PTHR16776:SF3">
    <property type="entry name" value="EXTRACELLULAR MATRIX PROTEIN 1"/>
    <property type="match status" value="1"/>
</dbReference>
<dbReference type="Pfam" id="PF05782">
    <property type="entry name" value="ECM1"/>
    <property type="match status" value="1"/>
</dbReference>
<dbReference type="SUPFAM" id="SSF48552">
    <property type="entry name" value="Serum albumin-like"/>
    <property type="match status" value="2"/>
</dbReference>
<organism>
    <name type="scientific">Mus musculus</name>
    <name type="common">Mouse</name>
    <dbReference type="NCBI Taxonomy" id="10090"/>
    <lineage>
        <taxon>Eukaryota</taxon>
        <taxon>Metazoa</taxon>
        <taxon>Chordata</taxon>
        <taxon>Craniata</taxon>
        <taxon>Vertebrata</taxon>
        <taxon>Euteleostomi</taxon>
        <taxon>Mammalia</taxon>
        <taxon>Eutheria</taxon>
        <taxon>Euarchontoglires</taxon>
        <taxon>Glires</taxon>
        <taxon>Rodentia</taxon>
        <taxon>Myomorpha</taxon>
        <taxon>Muroidea</taxon>
        <taxon>Muridae</taxon>
        <taxon>Murinae</taxon>
        <taxon>Mus</taxon>
        <taxon>Mus</taxon>
    </lineage>
</organism>
<feature type="signal peptide" evidence="7">
    <location>
        <begin position="1"/>
        <end position="19"/>
    </location>
</feature>
<feature type="chain" id="PRO_0000021147" description="Extracellular matrix protein 1">
    <location>
        <begin position="20"/>
        <end position="559"/>
    </location>
</feature>
<feature type="repeat" description="1">
    <location>
        <begin position="170"/>
        <end position="298"/>
    </location>
</feature>
<feature type="repeat" description="2">
    <location>
        <begin position="302"/>
        <end position="424"/>
    </location>
</feature>
<feature type="region of interest" description="2 X approximate repeats">
    <location>
        <begin position="170"/>
        <end position="424"/>
    </location>
</feature>
<feature type="region of interest" description="Disordered" evidence="4">
    <location>
        <begin position="535"/>
        <end position="559"/>
    </location>
</feature>
<feature type="modified residue" description="Phosphoserine" evidence="2">
    <location>
        <position position="556"/>
    </location>
</feature>
<feature type="glycosylation site" description="N-linked (GlcNAc...) asparagine" evidence="3">
    <location>
        <position position="373"/>
    </location>
</feature>
<feature type="glycosylation site" description="N-linked (GlcNAc...) (high mannose) asparagine" evidence="6">
    <location>
        <position position="463"/>
    </location>
</feature>
<feature type="glycosylation site" description="N-linked (GlcNAc...) (high mannose) asparagine" evidence="6">
    <location>
        <position position="535"/>
    </location>
</feature>
<feature type="splice variant" id="VSP_004230" description="In isoform Short." evidence="8">
    <location>
        <begin position="256"/>
        <end position="380"/>
    </location>
</feature>
<feature type="sequence conflict" description="In Ref. 1; AAA37535." evidence="9" ref="1">
    <original>P</original>
    <variation>L</variation>
    <location>
        <position position="53"/>
    </location>
</feature>
<feature type="sequence conflict" description="In Ref. 1; AAA37535." evidence="9" ref="1">
    <original>R</original>
    <variation>P</variation>
    <location>
        <position position="241"/>
    </location>
</feature>
<feature type="sequence conflict" description="In Ref. 1; AAA37535." evidence="9" ref="1">
    <original>I</original>
    <variation>V</variation>
    <location>
        <position position="466"/>
    </location>
</feature>
<reference key="1">
    <citation type="journal article" date="1995" name="J. Biol. Chem.">
        <title>Molecular cloning, characterization, and genetic mapping of the cDNA coding for a novel secretory protein of mouse. Demonstration of alternative splicing in skin and cartilage.</title>
        <authorList>
            <person name="Bhalerao J."/>
            <person name="Tylzanowski P."/>
            <person name="Filie J.D."/>
            <person name="Kozak C.A."/>
            <person name="Merregaert J."/>
        </authorList>
    </citation>
    <scope>NUCLEOTIDE SEQUENCE [MRNA] (ISOFORMS LONG AND SHORT)</scope>
    <scope>PROTEIN SEQUENCE OF 20-37; 71-83 AND 109-112</scope>
    <source>
        <strain>BALB/cJ</strain>
    </source>
</reference>
<reference key="2">
    <citation type="journal article" date="2005" name="Science">
        <title>The transcriptional landscape of the mammalian genome.</title>
        <authorList>
            <person name="Carninci P."/>
            <person name="Kasukawa T."/>
            <person name="Katayama S."/>
            <person name="Gough J."/>
            <person name="Frith M.C."/>
            <person name="Maeda N."/>
            <person name="Oyama R."/>
            <person name="Ravasi T."/>
            <person name="Lenhard B."/>
            <person name="Wells C."/>
            <person name="Kodzius R."/>
            <person name="Shimokawa K."/>
            <person name="Bajic V.B."/>
            <person name="Brenner S.E."/>
            <person name="Batalov S."/>
            <person name="Forrest A.R."/>
            <person name="Zavolan M."/>
            <person name="Davis M.J."/>
            <person name="Wilming L.G."/>
            <person name="Aidinis V."/>
            <person name="Allen J.E."/>
            <person name="Ambesi-Impiombato A."/>
            <person name="Apweiler R."/>
            <person name="Aturaliya R.N."/>
            <person name="Bailey T.L."/>
            <person name="Bansal M."/>
            <person name="Baxter L."/>
            <person name="Beisel K.W."/>
            <person name="Bersano T."/>
            <person name="Bono H."/>
            <person name="Chalk A.M."/>
            <person name="Chiu K.P."/>
            <person name="Choudhary V."/>
            <person name="Christoffels A."/>
            <person name="Clutterbuck D.R."/>
            <person name="Crowe M.L."/>
            <person name="Dalla E."/>
            <person name="Dalrymple B.P."/>
            <person name="de Bono B."/>
            <person name="Della Gatta G."/>
            <person name="di Bernardo D."/>
            <person name="Down T."/>
            <person name="Engstrom P."/>
            <person name="Fagiolini M."/>
            <person name="Faulkner G."/>
            <person name="Fletcher C.F."/>
            <person name="Fukushima T."/>
            <person name="Furuno M."/>
            <person name="Futaki S."/>
            <person name="Gariboldi M."/>
            <person name="Georgii-Hemming P."/>
            <person name="Gingeras T.R."/>
            <person name="Gojobori T."/>
            <person name="Green R.E."/>
            <person name="Gustincich S."/>
            <person name="Harbers M."/>
            <person name="Hayashi Y."/>
            <person name="Hensch T.K."/>
            <person name="Hirokawa N."/>
            <person name="Hill D."/>
            <person name="Huminiecki L."/>
            <person name="Iacono M."/>
            <person name="Ikeo K."/>
            <person name="Iwama A."/>
            <person name="Ishikawa T."/>
            <person name="Jakt M."/>
            <person name="Kanapin A."/>
            <person name="Katoh M."/>
            <person name="Kawasawa Y."/>
            <person name="Kelso J."/>
            <person name="Kitamura H."/>
            <person name="Kitano H."/>
            <person name="Kollias G."/>
            <person name="Krishnan S.P."/>
            <person name="Kruger A."/>
            <person name="Kummerfeld S.K."/>
            <person name="Kurochkin I.V."/>
            <person name="Lareau L.F."/>
            <person name="Lazarevic D."/>
            <person name="Lipovich L."/>
            <person name="Liu J."/>
            <person name="Liuni S."/>
            <person name="McWilliam S."/>
            <person name="Madan Babu M."/>
            <person name="Madera M."/>
            <person name="Marchionni L."/>
            <person name="Matsuda H."/>
            <person name="Matsuzawa S."/>
            <person name="Miki H."/>
            <person name="Mignone F."/>
            <person name="Miyake S."/>
            <person name="Morris K."/>
            <person name="Mottagui-Tabar S."/>
            <person name="Mulder N."/>
            <person name="Nakano N."/>
            <person name="Nakauchi H."/>
            <person name="Ng P."/>
            <person name="Nilsson R."/>
            <person name="Nishiguchi S."/>
            <person name="Nishikawa S."/>
            <person name="Nori F."/>
            <person name="Ohara O."/>
            <person name="Okazaki Y."/>
            <person name="Orlando V."/>
            <person name="Pang K.C."/>
            <person name="Pavan W.J."/>
            <person name="Pavesi G."/>
            <person name="Pesole G."/>
            <person name="Petrovsky N."/>
            <person name="Piazza S."/>
            <person name="Reed J."/>
            <person name="Reid J.F."/>
            <person name="Ring B.Z."/>
            <person name="Ringwald M."/>
            <person name="Rost B."/>
            <person name="Ruan Y."/>
            <person name="Salzberg S.L."/>
            <person name="Sandelin A."/>
            <person name="Schneider C."/>
            <person name="Schoenbach C."/>
            <person name="Sekiguchi K."/>
            <person name="Semple C.A."/>
            <person name="Seno S."/>
            <person name="Sessa L."/>
            <person name="Sheng Y."/>
            <person name="Shibata Y."/>
            <person name="Shimada H."/>
            <person name="Shimada K."/>
            <person name="Silva D."/>
            <person name="Sinclair B."/>
            <person name="Sperling S."/>
            <person name="Stupka E."/>
            <person name="Sugiura K."/>
            <person name="Sultana R."/>
            <person name="Takenaka Y."/>
            <person name="Taki K."/>
            <person name="Tammoja K."/>
            <person name="Tan S.L."/>
            <person name="Tang S."/>
            <person name="Taylor M.S."/>
            <person name="Tegner J."/>
            <person name="Teichmann S.A."/>
            <person name="Ueda H.R."/>
            <person name="van Nimwegen E."/>
            <person name="Verardo R."/>
            <person name="Wei C.L."/>
            <person name="Yagi K."/>
            <person name="Yamanishi H."/>
            <person name="Zabarovsky E."/>
            <person name="Zhu S."/>
            <person name="Zimmer A."/>
            <person name="Hide W."/>
            <person name="Bult C."/>
            <person name="Grimmond S.M."/>
            <person name="Teasdale R.D."/>
            <person name="Liu E.T."/>
            <person name="Brusic V."/>
            <person name="Quackenbush J."/>
            <person name="Wahlestedt C."/>
            <person name="Mattick J.S."/>
            <person name="Hume D.A."/>
            <person name="Kai C."/>
            <person name="Sasaki D."/>
            <person name="Tomaru Y."/>
            <person name="Fukuda S."/>
            <person name="Kanamori-Katayama M."/>
            <person name="Suzuki M."/>
            <person name="Aoki J."/>
            <person name="Arakawa T."/>
            <person name="Iida J."/>
            <person name="Imamura K."/>
            <person name="Itoh M."/>
            <person name="Kato T."/>
            <person name="Kawaji H."/>
            <person name="Kawagashira N."/>
            <person name="Kawashima T."/>
            <person name="Kojima M."/>
            <person name="Kondo S."/>
            <person name="Konno H."/>
            <person name="Nakano K."/>
            <person name="Ninomiya N."/>
            <person name="Nishio T."/>
            <person name="Okada M."/>
            <person name="Plessy C."/>
            <person name="Shibata K."/>
            <person name="Shiraki T."/>
            <person name="Suzuki S."/>
            <person name="Tagami M."/>
            <person name="Waki K."/>
            <person name="Watahiki A."/>
            <person name="Okamura-Oho Y."/>
            <person name="Suzuki H."/>
            <person name="Kawai J."/>
            <person name="Hayashizaki Y."/>
        </authorList>
    </citation>
    <scope>NUCLEOTIDE SEQUENCE [LARGE SCALE MRNA] (ISOFORM LONG)</scope>
    <source>
        <strain>C57BL/6J</strain>
        <tissue>Bone marrow</tissue>
    </source>
</reference>
<reference key="3">
    <citation type="journal article" date="2001" name="Bone">
        <title>Recombinant human extracellular matrix protein 1 inhibits alkaline phosphatase activity and mineralization of mouse embryonic metatarsals in vitro.</title>
        <authorList>
            <person name="Deckers M.M.L."/>
            <person name="Smits P."/>
            <person name="Karperien M."/>
            <person name="Ni J."/>
            <person name="Tylzanowski P."/>
            <person name="Feng P."/>
            <person name="Parmelee D."/>
            <person name="Zhang J."/>
            <person name="Bouffard E."/>
            <person name="Gentz R."/>
            <person name="Loewik C.W.G.M."/>
            <person name="Merregaert J."/>
        </authorList>
    </citation>
    <scope>TISSUE SPECIFICITY</scope>
</reference>
<reference key="4">
    <citation type="journal article" date="2005" name="Mol. Cell. Proteomics">
        <title>High throughput quantitative glycomics and glycoform-focused proteomics of murine dermis and epidermis.</title>
        <authorList>
            <person name="Uematsu R."/>
            <person name="Furukawa J."/>
            <person name="Nakagawa H."/>
            <person name="Shinohara Y."/>
            <person name="Deguchi K."/>
            <person name="Monde K."/>
            <person name="Nishimura S."/>
        </authorList>
    </citation>
    <scope>GLYCOSYLATION [LARGE SCALE ANALYSIS] AT ASN-463 AND ASN-535</scope>
    <source>
        <tissue>Epidermis</tissue>
    </source>
</reference>
<reference key="5">
    <citation type="journal article" date="2010" name="Cell">
        <title>A tissue-specific atlas of mouse protein phosphorylation and expression.</title>
        <authorList>
            <person name="Huttlin E.L."/>
            <person name="Jedrychowski M.P."/>
            <person name="Elias J.E."/>
            <person name="Goswami T."/>
            <person name="Rad R."/>
            <person name="Beausoleil S.A."/>
            <person name="Villen J."/>
            <person name="Haas W."/>
            <person name="Sowa M.E."/>
            <person name="Gygi S.P."/>
        </authorList>
    </citation>
    <scope>IDENTIFICATION BY MASS SPECTROMETRY [LARGE SCALE ANALYSIS]</scope>
    <source>
        <tissue>Liver</tissue>
        <tissue>Lung</tissue>
        <tissue>Spleen</tissue>
    </source>
</reference>
<evidence type="ECO:0000250" key="1"/>
<evidence type="ECO:0000250" key="2">
    <source>
        <dbReference type="UniProtKB" id="Q62894"/>
    </source>
</evidence>
<evidence type="ECO:0000255" key="3"/>
<evidence type="ECO:0000256" key="4">
    <source>
        <dbReference type="SAM" id="MobiDB-lite"/>
    </source>
</evidence>
<evidence type="ECO:0000269" key="5">
    <source>
    </source>
</evidence>
<evidence type="ECO:0000269" key="6">
    <source>
    </source>
</evidence>
<evidence type="ECO:0000269" key="7">
    <source>
    </source>
</evidence>
<evidence type="ECO:0000303" key="8">
    <source>
    </source>
</evidence>
<evidence type="ECO:0000305" key="9"/>
<accession>Q61508</accession>
<accession>Q3U5Q5</accession>